<feature type="signal peptide" evidence="2">
    <location>
        <begin position="1"/>
        <end position="36"/>
    </location>
</feature>
<feature type="chain" id="PRO_0000032949" description="Placental prolactin-related protein 1">
    <location>
        <begin position="37"/>
        <end position="238"/>
    </location>
</feature>
<feature type="glycosylation site" description="N-linked (GlcNAc...) asparagine" evidence="5">
    <location>
        <position position="70"/>
    </location>
</feature>
<feature type="glycosylation site" description="N-linked (GlcNAc...) asparagine" evidence="5">
    <location>
        <position position="92"/>
    </location>
</feature>
<feature type="disulfide bond" evidence="1">
    <location>
        <begin position="97"/>
        <end position="215"/>
    </location>
</feature>
<feature type="disulfide bond" evidence="1">
    <location>
        <begin position="232"/>
        <end position="238"/>
    </location>
</feature>
<feature type="sequence conflict" description="In Ref. 1; AAA30726." evidence="4" ref="1">
    <original>D</original>
    <variation>A</variation>
    <location>
        <position position="201"/>
    </location>
</feature>
<reference key="1">
    <citation type="journal article" date="1987" name="Proc. Natl. Acad. Sci. U.S.A.">
        <title>Molecular cloning of a prolactin-related mRNA expressed in bovine placenta.</title>
        <authorList>
            <person name="Schuler L.A."/>
            <person name="Hurley W.L."/>
        </authorList>
    </citation>
    <scope>NUCLEOTIDE SEQUENCE [MRNA]</scope>
    <source>
        <tissue>Placenta</tissue>
    </source>
</reference>
<reference key="2">
    <citation type="journal article" date="1989" name="DNA">
        <title>Characterization of the gene corresponding to bovine placental prolactin-related cDNA I: evolutionary implications.</title>
        <authorList>
            <person name="Ebbitt D.M."/>
            <person name="Hurley W.L."/>
            <person name="Kessler M.A."/>
            <person name="McDonald D.J."/>
            <person name="Schuler L.A."/>
        </authorList>
    </citation>
    <scope>NUCLEOTIDE SEQUENCE [GENOMIC DNA]</scope>
</reference>
<reference key="3">
    <citation type="submission" date="2007-07" db="EMBL/GenBank/DDBJ databases">
        <authorList>
            <consortium name="NIH - Mammalian Gene Collection (MGC) project"/>
        </authorList>
    </citation>
    <scope>NUCLEOTIDE SEQUENCE [LARGE SCALE MRNA]</scope>
    <source>
        <strain>Hereford</strain>
        <tissue>Placenta</tissue>
    </source>
</reference>
<reference key="4">
    <citation type="journal article" date="2006" name="Reproduction">
        <title>The glycosylation of pregnancy-associated glycoproteins and prolactin-related protein-I in bovine binucleate trophoblast giant cells changes before parturition.</title>
        <authorList>
            <person name="Klisch K."/>
            <person name="Boos A."/>
            <person name="Friedrich M."/>
            <person name="Herzog K."/>
            <person name="Feldmann M."/>
            <person name="Sousa N."/>
            <person name="Beckers J."/>
            <person name="Leiser R."/>
            <person name="Schuler G."/>
        </authorList>
    </citation>
    <scope>GLYCOSYLATION</scope>
</reference>
<name>PLRP1_BOVIN</name>
<dbReference type="EMBL" id="J02944">
    <property type="protein sequence ID" value="AAA30726.1"/>
    <property type="molecule type" value="mRNA"/>
</dbReference>
<dbReference type="EMBL" id="M25494">
    <property type="protein sequence ID" value="AAA30727.1"/>
    <property type="molecule type" value="Genomic_DNA"/>
</dbReference>
<dbReference type="EMBL" id="M25491">
    <property type="protein sequence ID" value="AAA30727.1"/>
    <property type="status" value="JOINED"/>
    <property type="molecule type" value="Genomic_DNA"/>
</dbReference>
<dbReference type="EMBL" id="M25492">
    <property type="protein sequence ID" value="AAA30727.1"/>
    <property type="status" value="JOINED"/>
    <property type="molecule type" value="Genomic_DNA"/>
</dbReference>
<dbReference type="EMBL" id="M25493">
    <property type="protein sequence ID" value="AAA30727.1"/>
    <property type="status" value="JOINED"/>
    <property type="molecule type" value="Genomic_DNA"/>
</dbReference>
<dbReference type="EMBL" id="BC149446">
    <property type="protein sequence ID" value="AAI49447.1"/>
    <property type="molecule type" value="mRNA"/>
</dbReference>
<dbReference type="PIR" id="A31417">
    <property type="entry name" value="A31417"/>
</dbReference>
<dbReference type="RefSeq" id="NP_776584.2">
    <property type="nucleotide sequence ID" value="NM_174159.3"/>
</dbReference>
<dbReference type="SMR" id="P05402"/>
<dbReference type="FunCoup" id="P05402">
    <property type="interactions" value="73"/>
</dbReference>
<dbReference type="STRING" id="9913.ENSBTAP00000045299"/>
<dbReference type="GlyCosmos" id="P05402">
    <property type="glycosylation" value="2 sites, No reported glycans"/>
</dbReference>
<dbReference type="GlyGen" id="P05402">
    <property type="glycosylation" value="2 sites"/>
</dbReference>
<dbReference type="iPTMnet" id="P05402"/>
<dbReference type="PaxDb" id="9913-ENSBTAP00000021026"/>
<dbReference type="GeneID" id="281429"/>
<dbReference type="KEGG" id="bta:281429"/>
<dbReference type="CTD" id="281429"/>
<dbReference type="eggNOG" id="ENOG502QYU3">
    <property type="taxonomic scope" value="Eukaryota"/>
</dbReference>
<dbReference type="HOGENOM" id="CLU_088274_0_1_1"/>
<dbReference type="InParanoid" id="P05402"/>
<dbReference type="OrthoDB" id="9946219at2759"/>
<dbReference type="TreeFam" id="TF332592"/>
<dbReference type="Proteomes" id="UP000009136">
    <property type="component" value="Unplaced"/>
</dbReference>
<dbReference type="GO" id="GO:0005615">
    <property type="term" value="C:extracellular space"/>
    <property type="evidence" value="ECO:0000318"/>
    <property type="project" value="GO_Central"/>
</dbReference>
<dbReference type="GO" id="GO:0005179">
    <property type="term" value="F:hormone activity"/>
    <property type="evidence" value="ECO:0000318"/>
    <property type="project" value="GO_Central"/>
</dbReference>
<dbReference type="GO" id="GO:0005148">
    <property type="term" value="F:prolactin receptor binding"/>
    <property type="evidence" value="ECO:0000318"/>
    <property type="project" value="GO_Central"/>
</dbReference>
<dbReference type="GO" id="GO:0007166">
    <property type="term" value="P:cell surface receptor signaling pathway"/>
    <property type="evidence" value="ECO:0000318"/>
    <property type="project" value="GO_Central"/>
</dbReference>
<dbReference type="GO" id="GO:0007565">
    <property type="term" value="P:female pregnancy"/>
    <property type="evidence" value="ECO:0000318"/>
    <property type="project" value="GO_Central"/>
</dbReference>
<dbReference type="GO" id="GO:0030879">
    <property type="term" value="P:mammary gland development"/>
    <property type="evidence" value="ECO:0000318"/>
    <property type="project" value="GO_Central"/>
</dbReference>
<dbReference type="GO" id="GO:0009891">
    <property type="term" value="P:positive regulation of biosynthetic process"/>
    <property type="evidence" value="ECO:0007669"/>
    <property type="project" value="UniProtKB-ARBA"/>
</dbReference>
<dbReference type="GO" id="GO:1903489">
    <property type="term" value="P:positive regulation of lactation"/>
    <property type="evidence" value="ECO:0000318"/>
    <property type="project" value="GO_Central"/>
</dbReference>
<dbReference type="GO" id="GO:0046427">
    <property type="term" value="P:positive regulation of receptor signaling pathway via JAK-STAT"/>
    <property type="evidence" value="ECO:0000318"/>
    <property type="project" value="GO_Central"/>
</dbReference>
<dbReference type="GO" id="GO:0031667">
    <property type="term" value="P:response to nutrient levels"/>
    <property type="evidence" value="ECO:0000318"/>
    <property type="project" value="GO_Central"/>
</dbReference>
<dbReference type="CDD" id="cd10288">
    <property type="entry name" value="prolactin_like"/>
    <property type="match status" value="1"/>
</dbReference>
<dbReference type="FunFam" id="1.20.1250.10:FF:000039">
    <property type="entry name" value="Placental prolactin-related protein 2"/>
    <property type="match status" value="1"/>
</dbReference>
<dbReference type="Gene3D" id="1.20.1250.10">
    <property type="match status" value="1"/>
</dbReference>
<dbReference type="InterPro" id="IPR009079">
    <property type="entry name" value="4_helix_cytokine-like_core"/>
</dbReference>
<dbReference type="InterPro" id="IPR001400">
    <property type="entry name" value="Somatotropin/Prolactin"/>
</dbReference>
<dbReference type="InterPro" id="IPR018116">
    <property type="entry name" value="Somatotropin_CS"/>
</dbReference>
<dbReference type="PANTHER" id="PTHR11417:SF5">
    <property type="entry name" value="PROLACTIN"/>
    <property type="match status" value="1"/>
</dbReference>
<dbReference type="PANTHER" id="PTHR11417">
    <property type="entry name" value="SOMATOTROPIN,PROLACTIN"/>
    <property type="match status" value="1"/>
</dbReference>
<dbReference type="Pfam" id="PF00103">
    <property type="entry name" value="Hormone_1"/>
    <property type="match status" value="1"/>
</dbReference>
<dbReference type="PRINTS" id="PR00836">
    <property type="entry name" value="SOMATOTROPIN"/>
</dbReference>
<dbReference type="SUPFAM" id="SSF47266">
    <property type="entry name" value="4-helical cytokines"/>
    <property type="match status" value="1"/>
</dbReference>
<dbReference type="PROSITE" id="PS00266">
    <property type="entry name" value="SOMATOTROPIN_1"/>
    <property type="match status" value="1"/>
</dbReference>
<dbReference type="PROSITE" id="PS00338">
    <property type="entry name" value="SOMATOTROPIN_2"/>
    <property type="match status" value="1"/>
</dbReference>
<accession>P05402</accession>
<accession>A6QPR5</accession>
<gene>
    <name type="primary">PRP1</name>
</gene>
<evidence type="ECO:0000250" key="1"/>
<evidence type="ECO:0000255" key="2"/>
<evidence type="ECO:0000269" key="3">
    <source>
    </source>
</evidence>
<evidence type="ECO:0000305" key="4"/>
<evidence type="ECO:0000305" key="5">
    <source>
    </source>
</evidence>
<protein>
    <recommendedName>
        <fullName>Placental prolactin-related protein 1</fullName>
        <shortName>PRC-I</shortName>
    </recommendedName>
    <alternativeName>
        <fullName>bPRCI</fullName>
    </alternativeName>
</protein>
<proteinExistence type="evidence at protein level"/>
<keyword id="KW-1015">Disulfide bond</keyword>
<keyword id="KW-0325">Glycoprotein</keyword>
<keyword id="KW-0372">Hormone</keyword>
<keyword id="KW-1185">Reference proteome</keyword>
<keyword id="KW-0964">Secreted</keyword>
<keyword id="KW-0732">Signal</keyword>
<organism>
    <name type="scientific">Bos taurus</name>
    <name type="common">Bovine</name>
    <dbReference type="NCBI Taxonomy" id="9913"/>
    <lineage>
        <taxon>Eukaryota</taxon>
        <taxon>Metazoa</taxon>
        <taxon>Chordata</taxon>
        <taxon>Craniata</taxon>
        <taxon>Vertebrata</taxon>
        <taxon>Euteleostomi</taxon>
        <taxon>Mammalia</taxon>
        <taxon>Eutheria</taxon>
        <taxon>Laurasiatheria</taxon>
        <taxon>Artiodactyla</taxon>
        <taxon>Ruminantia</taxon>
        <taxon>Pecora</taxon>
        <taxon>Bovidae</taxon>
        <taxon>Bovinae</taxon>
        <taxon>Bos</taxon>
    </lineage>
</organism>
<sequence>MAPAPSFRGHQWTYNPVRGSCLLLLLLMSNLLLCQGKSCPSCGPDVFVSLRKSFTDRFMNAASLSHDFYNLSTIMFNEFDEKYAQGKLYYINVTKSCHTNSFHAPEERDIVQQTNIEDLSKWTLVLLYSWNNPLHHLVTELQHMKELSNAFLSSATRFENMSEKLQAFIERQFSKIIVPVLNTMIQARSSWTGLPSLMSSDEDRRHSEFYNLFYCLRRDSRKVDMYIKILTCRTHKTC</sequence>
<comment type="function">
    <text>Placental prolactin-related proteins may play a specific role during gestation.</text>
</comment>
<comment type="subcellular location">
    <subcellularLocation>
        <location>Secreted</location>
    </subcellularLocation>
</comment>
<comment type="PTM">
    <text evidence="3">N-Glycosylated; the glycans terminate in either N-acetyl-galactosamine (GalNAc) or N-acetyllactosamine (PubMed:17071780). Terminal GalNAc on Asn-linked glycans is greatly reduced prior to parturition while lactosamine-type N-glycans remain unaltered (PubMed:17071780).</text>
</comment>
<comment type="similarity">
    <text evidence="4">Belongs to the somatotropin/prolactin family.</text>
</comment>